<dbReference type="EMBL" id="CP000860">
    <property type="protein sequence ID" value="ACA60699.1"/>
    <property type="molecule type" value="Genomic_DNA"/>
</dbReference>
<dbReference type="RefSeq" id="WP_012303273.1">
    <property type="nucleotide sequence ID" value="NC_010424.1"/>
</dbReference>
<dbReference type="SMR" id="B1I6Q1"/>
<dbReference type="STRING" id="477974.Daud_2212"/>
<dbReference type="KEGG" id="dau:Daud_2212"/>
<dbReference type="eggNOG" id="COG0359">
    <property type="taxonomic scope" value="Bacteria"/>
</dbReference>
<dbReference type="HOGENOM" id="CLU_078938_3_0_9"/>
<dbReference type="OrthoDB" id="9788336at2"/>
<dbReference type="Proteomes" id="UP000008544">
    <property type="component" value="Chromosome"/>
</dbReference>
<dbReference type="GO" id="GO:1990904">
    <property type="term" value="C:ribonucleoprotein complex"/>
    <property type="evidence" value="ECO:0007669"/>
    <property type="project" value="UniProtKB-KW"/>
</dbReference>
<dbReference type="GO" id="GO:0005840">
    <property type="term" value="C:ribosome"/>
    <property type="evidence" value="ECO:0007669"/>
    <property type="project" value="UniProtKB-KW"/>
</dbReference>
<dbReference type="GO" id="GO:0019843">
    <property type="term" value="F:rRNA binding"/>
    <property type="evidence" value="ECO:0007669"/>
    <property type="project" value="UniProtKB-UniRule"/>
</dbReference>
<dbReference type="GO" id="GO:0003735">
    <property type="term" value="F:structural constituent of ribosome"/>
    <property type="evidence" value="ECO:0007669"/>
    <property type="project" value="InterPro"/>
</dbReference>
<dbReference type="GO" id="GO:0006412">
    <property type="term" value="P:translation"/>
    <property type="evidence" value="ECO:0007669"/>
    <property type="project" value="UniProtKB-UniRule"/>
</dbReference>
<dbReference type="Gene3D" id="3.10.430.100">
    <property type="entry name" value="Ribosomal protein L9, C-terminal domain"/>
    <property type="match status" value="1"/>
</dbReference>
<dbReference type="Gene3D" id="3.40.5.10">
    <property type="entry name" value="Ribosomal protein L9, N-terminal domain"/>
    <property type="match status" value="1"/>
</dbReference>
<dbReference type="HAMAP" id="MF_00503">
    <property type="entry name" value="Ribosomal_bL9"/>
    <property type="match status" value="1"/>
</dbReference>
<dbReference type="InterPro" id="IPR000244">
    <property type="entry name" value="Ribosomal_bL9"/>
</dbReference>
<dbReference type="InterPro" id="IPR009027">
    <property type="entry name" value="Ribosomal_bL9/RNase_H1_N"/>
</dbReference>
<dbReference type="InterPro" id="IPR020594">
    <property type="entry name" value="Ribosomal_bL9_bac/chp"/>
</dbReference>
<dbReference type="InterPro" id="IPR020069">
    <property type="entry name" value="Ribosomal_bL9_C"/>
</dbReference>
<dbReference type="InterPro" id="IPR036791">
    <property type="entry name" value="Ribosomal_bL9_C_sf"/>
</dbReference>
<dbReference type="InterPro" id="IPR020070">
    <property type="entry name" value="Ribosomal_bL9_N"/>
</dbReference>
<dbReference type="InterPro" id="IPR036935">
    <property type="entry name" value="Ribosomal_bL9_N_sf"/>
</dbReference>
<dbReference type="NCBIfam" id="TIGR00158">
    <property type="entry name" value="L9"/>
    <property type="match status" value="1"/>
</dbReference>
<dbReference type="PANTHER" id="PTHR21368">
    <property type="entry name" value="50S RIBOSOMAL PROTEIN L9"/>
    <property type="match status" value="1"/>
</dbReference>
<dbReference type="Pfam" id="PF03948">
    <property type="entry name" value="Ribosomal_L9_C"/>
    <property type="match status" value="1"/>
</dbReference>
<dbReference type="Pfam" id="PF01281">
    <property type="entry name" value="Ribosomal_L9_N"/>
    <property type="match status" value="1"/>
</dbReference>
<dbReference type="SUPFAM" id="SSF55658">
    <property type="entry name" value="L9 N-domain-like"/>
    <property type="match status" value="1"/>
</dbReference>
<dbReference type="SUPFAM" id="SSF55653">
    <property type="entry name" value="Ribosomal protein L9 C-domain"/>
    <property type="match status" value="1"/>
</dbReference>
<dbReference type="PROSITE" id="PS00651">
    <property type="entry name" value="RIBOSOMAL_L9"/>
    <property type="match status" value="1"/>
</dbReference>
<name>RL9_DESAP</name>
<reference key="1">
    <citation type="submission" date="2007-10" db="EMBL/GenBank/DDBJ databases">
        <title>Complete sequence of chromosome of Desulforudis audaxviator MP104C.</title>
        <authorList>
            <person name="Copeland A."/>
            <person name="Lucas S."/>
            <person name="Lapidus A."/>
            <person name="Barry K."/>
            <person name="Glavina del Rio T."/>
            <person name="Dalin E."/>
            <person name="Tice H."/>
            <person name="Bruce D."/>
            <person name="Pitluck S."/>
            <person name="Lowry S.R."/>
            <person name="Larimer F."/>
            <person name="Land M.L."/>
            <person name="Hauser L."/>
            <person name="Kyrpides N."/>
            <person name="Ivanova N.N."/>
            <person name="Richardson P."/>
        </authorList>
    </citation>
    <scope>NUCLEOTIDE SEQUENCE [LARGE SCALE GENOMIC DNA]</scope>
    <source>
        <strain>MP104C</strain>
    </source>
</reference>
<proteinExistence type="inferred from homology"/>
<protein>
    <recommendedName>
        <fullName evidence="1">Large ribosomal subunit protein bL9</fullName>
    </recommendedName>
    <alternativeName>
        <fullName evidence="2">50S ribosomal protein L9</fullName>
    </alternativeName>
</protein>
<sequence>MKVVLLKDVAGLGIRGQVVKVAEGYGRNYLIPKGLAEEATPGRIKELARLDQAREERVERLAAQARKVAAGLKGLTVRIPARAGEGGKLFGSVGNKDIAAALAARHNLKIDRKKLELKEPIRSLGKFPVLARLHPGVQVEFEVEVVDNGT</sequence>
<comment type="function">
    <text evidence="1">Binds to the 23S rRNA.</text>
</comment>
<comment type="similarity">
    <text evidence="1">Belongs to the bacterial ribosomal protein bL9 family.</text>
</comment>
<organism>
    <name type="scientific">Desulforudis audaxviator (strain MP104C)</name>
    <dbReference type="NCBI Taxonomy" id="477974"/>
    <lineage>
        <taxon>Bacteria</taxon>
        <taxon>Bacillati</taxon>
        <taxon>Bacillota</taxon>
        <taxon>Clostridia</taxon>
        <taxon>Thermoanaerobacterales</taxon>
        <taxon>Candidatus Desulforudaceae</taxon>
        <taxon>Candidatus Desulforudis</taxon>
    </lineage>
</organism>
<feature type="chain" id="PRO_1000126901" description="Large ribosomal subunit protein bL9">
    <location>
        <begin position="1"/>
        <end position="150"/>
    </location>
</feature>
<gene>
    <name evidence="1" type="primary">rplI</name>
    <name type="ordered locus">Daud_2212</name>
</gene>
<evidence type="ECO:0000255" key="1">
    <source>
        <dbReference type="HAMAP-Rule" id="MF_00503"/>
    </source>
</evidence>
<evidence type="ECO:0000305" key="2"/>
<keyword id="KW-1185">Reference proteome</keyword>
<keyword id="KW-0687">Ribonucleoprotein</keyword>
<keyword id="KW-0689">Ribosomal protein</keyword>
<keyword id="KW-0694">RNA-binding</keyword>
<keyword id="KW-0699">rRNA-binding</keyword>
<accession>B1I6Q1</accession>